<protein>
    <recommendedName>
        <fullName>Antiviral protein S</fullName>
        <ecNumber>3.2.2.22</ecNumber>
    </recommendedName>
    <alternativeName>
        <fullName>PAP-S</fullName>
    </alternativeName>
    <alternativeName>
        <fullName>Ribosome-inactivating protein</fullName>
    </alternativeName>
    <alternativeName>
        <fullName>rRNA N-glycosidase</fullName>
    </alternativeName>
</protein>
<feature type="chain" id="PRO_0000221415" description="Antiviral protein S">
    <location>
        <begin position="1"/>
        <end position="261"/>
    </location>
</feature>
<feature type="active site" evidence="1">
    <location>
        <position position="175"/>
    </location>
</feature>
<feature type="disulfide bond" evidence="2">
    <location>
        <begin position="34"/>
        <end position="258"/>
    </location>
</feature>
<feature type="disulfide bond" evidence="2">
    <location>
        <begin position="84"/>
        <end position="105"/>
    </location>
</feature>
<feature type="strand" evidence="4">
    <location>
        <begin position="3"/>
        <end position="10"/>
    </location>
</feature>
<feature type="helix" evidence="4">
    <location>
        <begin position="13"/>
        <end position="27"/>
    </location>
</feature>
<feature type="strand" evidence="4">
    <location>
        <begin position="34"/>
        <end position="36"/>
    </location>
</feature>
<feature type="strand" evidence="5">
    <location>
        <begin position="37"/>
        <end position="39"/>
    </location>
</feature>
<feature type="strand" evidence="4">
    <location>
        <begin position="49"/>
        <end position="55"/>
    </location>
</feature>
<feature type="strand" evidence="4">
    <location>
        <begin position="61"/>
        <end position="67"/>
    </location>
</feature>
<feature type="turn" evidence="4">
    <location>
        <begin position="68"/>
        <end position="70"/>
    </location>
</feature>
<feature type="strand" evidence="4">
    <location>
        <begin position="73"/>
        <end position="80"/>
    </location>
</feature>
<feature type="strand" evidence="4">
    <location>
        <begin position="83"/>
        <end position="88"/>
    </location>
</feature>
<feature type="helix" evidence="4">
    <location>
        <begin position="95"/>
        <end position="104"/>
    </location>
</feature>
<feature type="strand" evidence="4">
    <location>
        <begin position="111"/>
        <end position="113"/>
    </location>
</feature>
<feature type="strand" evidence="5">
    <location>
        <begin position="116"/>
        <end position="118"/>
    </location>
</feature>
<feature type="helix" evidence="4">
    <location>
        <begin position="122"/>
        <end position="129"/>
    </location>
</feature>
<feature type="helix" evidence="4">
    <location>
        <begin position="134"/>
        <end position="136"/>
    </location>
</feature>
<feature type="helix" evidence="4">
    <location>
        <begin position="141"/>
        <end position="151"/>
    </location>
</feature>
<feature type="helix" evidence="4">
    <location>
        <begin position="159"/>
        <end position="172"/>
    </location>
</feature>
<feature type="helix" evidence="4">
    <location>
        <begin position="174"/>
        <end position="178"/>
    </location>
</feature>
<feature type="helix" evidence="4">
    <location>
        <begin position="180"/>
        <end position="188"/>
    </location>
</feature>
<feature type="strand" evidence="4">
    <location>
        <begin position="190"/>
        <end position="192"/>
    </location>
</feature>
<feature type="helix" evidence="4">
    <location>
        <begin position="198"/>
        <end position="205"/>
    </location>
</feature>
<feature type="helix" evidence="4">
    <location>
        <begin position="207"/>
        <end position="215"/>
    </location>
</feature>
<feature type="helix" evidence="4">
    <location>
        <begin position="218"/>
        <end position="220"/>
    </location>
</feature>
<feature type="strand" evidence="4">
    <location>
        <begin position="221"/>
        <end position="229"/>
    </location>
</feature>
<feature type="strand" evidence="4">
    <location>
        <begin position="235"/>
        <end position="240"/>
    </location>
</feature>
<feature type="helix" evidence="4">
    <location>
        <begin position="241"/>
        <end position="244"/>
    </location>
</feature>
<feature type="helix" evidence="5">
    <location>
        <begin position="245"/>
        <end position="247"/>
    </location>
</feature>
<accession>P23339</accession>
<sequence>INTITFDAGNATINKYATFMESLRNEAKDPSLKCYGIPMLPNTNSTIKYLLVKLQGASLKTITLMLRRNNLYVMGYSDPYDNKCRYHIFNDIKGTEYSDVENTLCPSSNPRVAKPINYNGLYPTLEKKAGVTSRNEVQLGIQILSSDIGKISGQGSFTEKIEAKFLLVAIQMVSEAARFKYIENQVKTNFNRDFSPNDKVLDLEENWGKISTAIHNSKNGALPKPLELKNADGTKWIVLRVDEIKPDVGLLNYVNGTCQAT</sequence>
<organism>
    <name type="scientific">Phytolacca americana</name>
    <name type="common">American pokeweed</name>
    <name type="synonym">Phytolacca decandra</name>
    <dbReference type="NCBI Taxonomy" id="3527"/>
    <lineage>
        <taxon>Eukaryota</taxon>
        <taxon>Viridiplantae</taxon>
        <taxon>Streptophyta</taxon>
        <taxon>Embryophyta</taxon>
        <taxon>Tracheophyta</taxon>
        <taxon>Spermatophyta</taxon>
        <taxon>Magnoliopsida</taxon>
        <taxon>eudicotyledons</taxon>
        <taxon>Gunneridae</taxon>
        <taxon>Pentapetalae</taxon>
        <taxon>Caryophyllales</taxon>
        <taxon>Phytolaccaceae</taxon>
        <taxon>Phytolacca</taxon>
    </lineage>
</organism>
<proteinExistence type="evidence at protein level"/>
<name>RIPS_PHYAM</name>
<dbReference type="EC" id="3.2.2.22"/>
<dbReference type="PIR" id="JE0401">
    <property type="entry name" value="JE0401"/>
</dbReference>
<dbReference type="PDB" id="1GIK">
    <property type="method" value="X-ray"/>
    <property type="resolution" value="1.80 A"/>
    <property type="chains" value="A=1-261"/>
</dbReference>
<dbReference type="PDB" id="1J1Q">
    <property type="method" value="X-ray"/>
    <property type="resolution" value="1.80 A"/>
    <property type="chains" value="A=1-261"/>
</dbReference>
<dbReference type="PDB" id="1J1R">
    <property type="method" value="X-ray"/>
    <property type="resolution" value="1.90 A"/>
    <property type="chains" value="A=1-261"/>
</dbReference>
<dbReference type="PDB" id="1J1S">
    <property type="method" value="X-ray"/>
    <property type="resolution" value="2.00 A"/>
    <property type="chains" value="A=1-261"/>
</dbReference>
<dbReference type="PDBsum" id="1GIK"/>
<dbReference type="PDBsum" id="1J1Q"/>
<dbReference type="PDBsum" id="1J1R"/>
<dbReference type="PDBsum" id="1J1S"/>
<dbReference type="SMR" id="P23339"/>
<dbReference type="EvolutionaryTrace" id="P23339"/>
<dbReference type="GO" id="GO:0030598">
    <property type="term" value="F:rRNA N-glycosylase activity"/>
    <property type="evidence" value="ECO:0007669"/>
    <property type="project" value="UniProtKB-EC"/>
</dbReference>
<dbReference type="GO" id="GO:0090729">
    <property type="term" value="F:toxin activity"/>
    <property type="evidence" value="ECO:0007669"/>
    <property type="project" value="UniProtKB-KW"/>
</dbReference>
<dbReference type="GO" id="GO:0051607">
    <property type="term" value="P:defense response to virus"/>
    <property type="evidence" value="ECO:0007669"/>
    <property type="project" value="UniProtKB-KW"/>
</dbReference>
<dbReference type="GO" id="GO:0017148">
    <property type="term" value="P:negative regulation of translation"/>
    <property type="evidence" value="ECO:0007669"/>
    <property type="project" value="UniProtKB-KW"/>
</dbReference>
<dbReference type="FunFam" id="4.10.470.10:FF:000002">
    <property type="entry name" value="Antiviral protein I"/>
    <property type="match status" value="1"/>
</dbReference>
<dbReference type="FunFam" id="3.40.420.10:FF:000001">
    <property type="entry name" value="Ricin"/>
    <property type="match status" value="1"/>
</dbReference>
<dbReference type="Gene3D" id="3.40.420.10">
    <property type="entry name" value="Ricin (A subunit), domain 1"/>
    <property type="match status" value="1"/>
</dbReference>
<dbReference type="Gene3D" id="4.10.470.10">
    <property type="entry name" value="Ricin (A Subunit), domain 2"/>
    <property type="match status" value="1"/>
</dbReference>
<dbReference type="InterPro" id="IPR036041">
    <property type="entry name" value="Ribosome-inact_prot_sf"/>
</dbReference>
<dbReference type="InterPro" id="IPR017989">
    <property type="entry name" value="Ribosome_inactivat_1/2"/>
</dbReference>
<dbReference type="InterPro" id="IPR001574">
    <property type="entry name" value="Ribosome_inactivat_prot"/>
</dbReference>
<dbReference type="InterPro" id="IPR017988">
    <property type="entry name" value="Ribosome_inactivat_prot_CS"/>
</dbReference>
<dbReference type="InterPro" id="IPR016138">
    <property type="entry name" value="Ribosome_inactivat_prot_sub1"/>
</dbReference>
<dbReference type="InterPro" id="IPR016139">
    <property type="entry name" value="Ribosome_inactivat_prot_sub2"/>
</dbReference>
<dbReference type="PANTHER" id="PTHR33453">
    <property type="match status" value="1"/>
</dbReference>
<dbReference type="PANTHER" id="PTHR33453:SF34">
    <property type="entry name" value="RIBOSOME-INACTIVATING PROTEIN"/>
    <property type="match status" value="1"/>
</dbReference>
<dbReference type="Pfam" id="PF00161">
    <property type="entry name" value="RIP"/>
    <property type="match status" value="1"/>
</dbReference>
<dbReference type="PRINTS" id="PR00396">
    <property type="entry name" value="SHIGARICIN"/>
</dbReference>
<dbReference type="SUPFAM" id="SSF56371">
    <property type="entry name" value="Ribosome inactivating proteins (RIP)"/>
    <property type="match status" value="1"/>
</dbReference>
<dbReference type="PROSITE" id="PS00275">
    <property type="entry name" value="SHIGA_RICIN"/>
    <property type="match status" value="1"/>
</dbReference>
<comment type="function">
    <text>Inhibits viral infection of plants, and protein synthesis in vitro.</text>
</comment>
<comment type="catalytic activity">
    <reaction>
        <text>Endohydrolysis of the N-glycosidic bond at one specific adenosine on the 28S rRNA.</text>
        <dbReference type="EC" id="3.2.2.22"/>
    </reaction>
</comment>
<comment type="similarity">
    <text evidence="3">Belongs to the ribosome-inactivating protein family. Type 1 RIP subfamily.</text>
</comment>
<reference key="1">
    <citation type="journal article" date="1990" name="Agric. Biol. Chem.">
        <title>The complete amino acid sequence of antiviral protein from the seeds of pokeweed (Phytolacca americana).</title>
        <authorList>
            <person name="Kung S.S."/>
            <person name="Kimura M."/>
            <person name="Funatsu G."/>
        </authorList>
    </citation>
    <scope>PROTEIN SEQUENCE</scope>
    <source>
        <tissue>Seed</tissue>
    </source>
</reference>
<evidence type="ECO:0000250" key="1"/>
<evidence type="ECO:0000269" key="2">
    <source>
    </source>
</evidence>
<evidence type="ECO:0000305" key="3"/>
<evidence type="ECO:0007829" key="4">
    <source>
        <dbReference type="PDB" id="1GIK"/>
    </source>
</evidence>
<evidence type="ECO:0007829" key="5">
    <source>
        <dbReference type="PDB" id="1J1Q"/>
    </source>
</evidence>
<keyword id="KW-0002">3D-structure</keyword>
<keyword id="KW-0051">Antiviral defense</keyword>
<keyword id="KW-0903">Direct protein sequencing</keyword>
<keyword id="KW-1015">Disulfide bond</keyword>
<keyword id="KW-0378">Hydrolase</keyword>
<keyword id="KW-0611">Plant defense</keyword>
<keyword id="KW-0652">Protein synthesis inhibitor</keyword>
<keyword id="KW-0800">Toxin</keyword>